<sequence>MIFIDACFRKETPYTPIWMMRQAGRYLREYQESRKKAGSFLELCKNSDLATEVTLQPVEILGVDAAILFSDILVVPLEMGLNLEFIPKKGPHFLETITDLKSVENLKVGAYKQLNYVYDTISQTRQKLSKEKALIGFCGSPWTLATYMIEGEGSKSYAKSKKMLYSEPEVLKALLEKLSLELIEYLSLQIQAGVNAVMIFDSWASALEKEAYLKFSWDYLKKISKELKKRYAHIPVILFPKGIGAYLDSIDGEFDVFGVDWGTPLTAAKKILGGKYVLQGNLEPTRLYDKNALEEGVEGILKVMGNQGHIFNLGHGMLPDLPRENAKYLVQLVHAKTRR</sequence>
<feature type="chain" id="PRO_0000325653" description="Uroporphyrinogen decarboxylase">
    <location>
        <begin position="1"/>
        <end position="339"/>
    </location>
</feature>
<feature type="binding site" evidence="1">
    <location>
        <begin position="21"/>
        <end position="25"/>
    </location>
    <ligand>
        <name>substrate</name>
    </ligand>
</feature>
<feature type="binding site" evidence="1">
    <location>
        <position position="71"/>
    </location>
    <ligand>
        <name>substrate</name>
    </ligand>
</feature>
<feature type="binding site" evidence="1">
    <location>
        <position position="147"/>
    </location>
    <ligand>
        <name>substrate</name>
    </ligand>
</feature>
<feature type="binding site" evidence="1">
    <location>
        <position position="202"/>
    </location>
    <ligand>
        <name>substrate</name>
    </ligand>
</feature>
<feature type="binding site" evidence="1">
    <location>
        <position position="315"/>
    </location>
    <ligand>
        <name>substrate</name>
    </ligand>
</feature>
<feature type="site" description="Transition state stabilizer" evidence="1">
    <location>
        <position position="71"/>
    </location>
</feature>
<reference key="1">
    <citation type="journal article" date="2006" name="Proc. Natl. Acad. Sci. U.S.A.">
        <title>The complete genome sequence of a chronic atrophic gastritis Helicobacter pylori strain: evolution during disease progression.</title>
        <authorList>
            <person name="Oh J.D."/>
            <person name="Kling-Baeckhed H."/>
            <person name="Giannakis M."/>
            <person name="Xu J."/>
            <person name="Fulton R.S."/>
            <person name="Fulton L.A."/>
            <person name="Cordum H.S."/>
            <person name="Wang C."/>
            <person name="Elliott G."/>
            <person name="Edwards J."/>
            <person name="Mardis E.R."/>
            <person name="Engstrand L.G."/>
            <person name="Gordon J.I."/>
        </authorList>
    </citation>
    <scope>NUCLEOTIDE SEQUENCE [LARGE SCALE GENOMIC DNA]</scope>
    <source>
        <strain>HPAG1</strain>
    </source>
</reference>
<dbReference type="EC" id="4.1.1.37" evidence="1"/>
<dbReference type="EMBL" id="CP000241">
    <property type="protein sequence ID" value="ABF84652.1"/>
    <property type="status" value="ALT_INIT"/>
    <property type="molecule type" value="Genomic_DNA"/>
</dbReference>
<dbReference type="RefSeq" id="WP_041200091.1">
    <property type="nucleotide sequence ID" value="NC_008086.1"/>
</dbReference>
<dbReference type="SMR" id="Q1CTS0"/>
<dbReference type="KEGG" id="hpa:HPAG1_0585"/>
<dbReference type="HOGENOM" id="CLU_040933_0_0_7"/>
<dbReference type="UniPathway" id="UPA00251">
    <property type="reaction ID" value="UER00321"/>
</dbReference>
<dbReference type="GO" id="GO:0005829">
    <property type="term" value="C:cytosol"/>
    <property type="evidence" value="ECO:0007669"/>
    <property type="project" value="TreeGrafter"/>
</dbReference>
<dbReference type="GO" id="GO:0004853">
    <property type="term" value="F:uroporphyrinogen decarboxylase activity"/>
    <property type="evidence" value="ECO:0007669"/>
    <property type="project" value="UniProtKB-UniRule"/>
</dbReference>
<dbReference type="GO" id="GO:0019353">
    <property type="term" value="P:protoporphyrinogen IX biosynthetic process from glutamate"/>
    <property type="evidence" value="ECO:0007669"/>
    <property type="project" value="TreeGrafter"/>
</dbReference>
<dbReference type="CDD" id="cd00717">
    <property type="entry name" value="URO-D"/>
    <property type="match status" value="1"/>
</dbReference>
<dbReference type="FunFam" id="3.20.20.210:FF:000007">
    <property type="entry name" value="Uroporphyrinogen decarboxylase"/>
    <property type="match status" value="1"/>
</dbReference>
<dbReference type="Gene3D" id="3.20.20.210">
    <property type="match status" value="1"/>
</dbReference>
<dbReference type="HAMAP" id="MF_00218">
    <property type="entry name" value="URO_D"/>
    <property type="match status" value="1"/>
</dbReference>
<dbReference type="InterPro" id="IPR038071">
    <property type="entry name" value="UROD/MetE-like_sf"/>
</dbReference>
<dbReference type="InterPro" id="IPR006361">
    <property type="entry name" value="Uroporphyrinogen_deCO2ase_HemE"/>
</dbReference>
<dbReference type="InterPro" id="IPR000257">
    <property type="entry name" value="Uroporphyrinogen_deCOase"/>
</dbReference>
<dbReference type="NCBIfam" id="TIGR01464">
    <property type="entry name" value="hemE"/>
    <property type="match status" value="1"/>
</dbReference>
<dbReference type="PANTHER" id="PTHR21091">
    <property type="entry name" value="METHYLTETRAHYDROFOLATE:HOMOCYSTEINE METHYLTRANSFERASE RELATED"/>
    <property type="match status" value="1"/>
</dbReference>
<dbReference type="PANTHER" id="PTHR21091:SF169">
    <property type="entry name" value="UROPORPHYRINOGEN DECARBOXYLASE"/>
    <property type="match status" value="1"/>
</dbReference>
<dbReference type="Pfam" id="PF01208">
    <property type="entry name" value="URO-D"/>
    <property type="match status" value="1"/>
</dbReference>
<dbReference type="SUPFAM" id="SSF51726">
    <property type="entry name" value="UROD/MetE-like"/>
    <property type="match status" value="1"/>
</dbReference>
<dbReference type="PROSITE" id="PS00906">
    <property type="entry name" value="UROD_1"/>
    <property type="match status" value="1"/>
</dbReference>
<dbReference type="PROSITE" id="PS00907">
    <property type="entry name" value="UROD_2"/>
    <property type="match status" value="1"/>
</dbReference>
<evidence type="ECO:0000255" key="1">
    <source>
        <dbReference type="HAMAP-Rule" id="MF_00218"/>
    </source>
</evidence>
<evidence type="ECO:0000305" key="2"/>
<accession>Q1CTS0</accession>
<gene>
    <name evidence="1" type="primary">hemE</name>
    <name type="ordered locus">HPAG1_0585</name>
</gene>
<organism>
    <name type="scientific">Helicobacter pylori (strain HPAG1)</name>
    <dbReference type="NCBI Taxonomy" id="357544"/>
    <lineage>
        <taxon>Bacteria</taxon>
        <taxon>Pseudomonadati</taxon>
        <taxon>Campylobacterota</taxon>
        <taxon>Epsilonproteobacteria</taxon>
        <taxon>Campylobacterales</taxon>
        <taxon>Helicobacteraceae</taxon>
        <taxon>Helicobacter</taxon>
    </lineage>
</organism>
<proteinExistence type="inferred from homology"/>
<protein>
    <recommendedName>
        <fullName evidence="1">Uroporphyrinogen decarboxylase</fullName>
        <shortName evidence="1">UPD</shortName>
        <shortName evidence="1">URO-D</shortName>
        <ecNumber evidence="1">4.1.1.37</ecNumber>
    </recommendedName>
</protein>
<keyword id="KW-0963">Cytoplasm</keyword>
<keyword id="KW-0210">Decarboxylase</keyword>
<keyword id="KW-0456">Lyase</keyword>
<keyword id="KW-0627">Porphyrin biosynthesis</keyword>
<name>DCUP_HELPH</name>
<comment type="function">
    <text evidence="1">Catalyzes the decarboxylation of four acetate groups of uroporphyrinogen-III to yield coproporphyrinogen-III.</text>
</comment>
<comment type="catalytic activity">
    <reaction evidence="1">
        <text>uroporphyrinogen III + 4 H(+) = coproporphyrinogen III + 4 CO2</text>
        <dbReference type="Rhea" id="RHEA:19865"/>
        <dbReference type="ChEBI" id="CHEBI:15378"/>
        <dbReference type="ChEBI" id="CHEBI:16526"/>
        <dbReference type="ChEBI" id="CHEBI:57308"/>
        <dbReference type="ChEBI" id="CHEBI:57309"/>
        <dbReference type="EC" id="4.1.1.37"/>
    </reaction>
</comment>
<comment type="pathway">
    <text evidence="1">Porphyrin-containing compound metabolism; protoporphyrin-IX biosynthesis; coproporphyrinogen-III from 5-aminolevulinate: step 4/4.</text>
</comment>
<comment type="subunit">
    <text evidence="1">Homodimer.</text>
</comment>
<comment type="subcellular location">
    <subcellularLocation>
        <location evidence="1">Cytoplasm</location>
    </subcellularLocation>
</comment>
<comment type="similarity">
    <text evidence="1">Belongs to the uroporphyrinogen decarboxylase family.</text>
</comment>
<comment type="sequence caution" evidence="2">
    <conflict type="erroneous initiation">
        <sequence resource="EMBL-CDS" id="ABF84652"/>
    </conflict>
</comment>